<sequence length="628" mass="68723">MAAAGAGPGQEAGAGPGPGAVANATGAEEGEMKPVAAGAAAPPGEGISAAPTVEPSSGEAEGGEANLVDVSGGLETESSNGKDTLEGAGDTSEVMDTQAGSVDEENGRQLGEVELQCGICTKWFTADTFGIDTSSCLPFMTNYSFHCNVCHHSGNTYFLRKQANLKEMCLSALANLTWQSRTQDEHPKTMFSKDKDIIPFIDKYWECMTTRQRPGKMTWPNNIVKTMSKERDVFLVKEHPDPGSKDPEEDYPKFGLLDQDLSNIGPAYDNQKQSSAVSTSGNLNGGIAAGSSGKGRGAKRKQQDGGTTGTTKKARSDPLFSAQRLPPHGYPLEHPFNKDGYRYILAEPDPHAPDPEKLELDCWAGKPIPGDLYRACLYERVLLALHDRAPQLKISDDRLTVVGEKGYSMVRASHGVRKGAWYFEITVDEMPPDTAARLGWSQPLGNLQAPLGYDKFSYSWRSKKGTKFHQSIGKHYSSGYGQGDVLGFYINLPEDTETAKSLPDTYKDKALIKFKSYLYFEEKDFVDKAEKSLKQTPHSEIIFYKNGVNQGVAYKDIFEGVYFPAISLYKSCTVSINFGPCFKYPPKDLTYRPMSDMGWGAVVEHTLADVLYHVETEVDGRRSPPWEP</sequence>
<proteinExistence type="evidence at protein level"/>
<keyword id="KW-0002">3D-structure</keyword>
<keyword id="KW-0007">Acetylation</keyword>
<keyword id="KW-0025">Alternative splicing</keyword>
<keyword id="KW-0156">Chromatin regulator</keyword>
<keyword id="KW-0238">DNA-binding</keyword>
<keyword id="KW-0479">Metal-binding</keyword>
<keyword id="KW-0488">Methylation</keyword>
<keyword id="KW-0539">Nucleus</keyword>
<keyword id="KW-0597">Phosphoprotein</keyword>
<keyword id="KW-1267">Proteomics identification</keyword>
<keyword id="KW-1185">Reference proteome</keyword>
<keyword id="KW-0804">Transcription</keyword>
<keyword id="KW-0805">Transcription regulation</keyword>
<keyword id="KW-0862">Zinc</keyword>
<keyword id="KW-0863">Zinc-finger</keyword>
<comment type="function">
    <text evidence="5 14 15 16 18">Transcriptional regulator (PubMed:12670868). Component or associated component of some histone methyltransferase complexes which regulates transcription through recruitment of those complexes to gene promoters (PubMed:19131338). Component of the Set1/Ash2 histone methyltransferase (HMT) complex, a complex that specifically methylates 'Lys-4' of histone H3, but not if the neighboring 'Lys-9' residue is already methylated (PubMed:19556245). As part of the MLL1/MLL complex it is involved in methylation and dimethylation at 'Lys-4' of histone H3 (PubMed:19556245). May play a role in hematopoiesis (PubMed:12670868). In association with RBBP5 and WDR5, stimulates the histone methyltransferase activities of KMT2A, KMT2B, KMT2C, KMT2D, SETD1A and SETD1B (PubMed:21220120, PubMed:22266653).</text>
</comment>
<comment type="subunit">
    <text evidence="1 5 6 7 8 9 10 11 12 13 14 15 16">Interacts with HCFC1 (PubMed:12670868). Core component of several methyltransferase-containing complexes including MLL1/MLL, MLL2/3 (also named ASCOM complex) and MLL4/WBP7 (PubMed:15199122, PubMed:15960975, PubMed:17500065). Each complex is at least composed of ASH2L, RBBP5, WDR5, DPY30, one or more specific histone methyltransferases (KMT2A/MLL1, KMT2D/MLL2, KMT2C/MLL3 and KMT2B/MLL4), and the facultative components PAGR1, BACC1, CHD8, E2F6, HCFC1, HCFC2, HSP70, INO80C, KDM6A, KANSL1, LAS1L, MAX, MCRS1, MEN1, MGA, KAT8/MOF, NCOA6, PAXIP1/PTIP, PELP1, PHF20, PRP31, RING2, RUVB1/TIP49A, RUVB2/TIP49B, SENP3, TAF1, TAF4, TAF6, TAF7, TAF9, TEX10 and alpha- and beta-tubulin (PubMed:14992727, PubMed:15199122, PubMed:15960975, PubMed:17500065). Component of the SET1 complex, at least composed of the catalytic subunit (SETD1A or SETD1B), WDR5, WDR82, RBBP5, ASH2L/ASH2, CXXC1/CFP1, HCFC1 and DPY30 (PubMed:16253997, PubMed:17355966, PubMed:17998332, PubMed:18838538). Found in a complex with RBBP5, ASH2L, DPY30, KMT2A, KMT2D and WDR5 (By similarity). Component of a histone methylation complex composed of at least ZNF335, RBBP5, ASH2L and WDR5; the complex may have histone H3-specific methyltransferase activity, however does not have specificity for 'Lys-4' of histone H3 (PubMed:19131338). Within the complex, interacts with ZNF335 (PubMed:19131338). Interacts with RBBP5 (PubMed:19131338, PubMed:19556245, PubMed:21220120). Components of this complex may associate with components of a nuclear receptor-mediated transcription complex to form a complex at least composed of ZNF335, HCFC1, CCAR2, EMSY, MKI67, RBBP5, ASH2L and WDR5 (PubMed:19131338). Within this complex also interacts with CCAR2 and EMSY (PubMed:19131338). Interacts with DPY30 (PubMed:19556245). Interacts with SETD1A and SETD1B (PubMed:17998332).</text>
</comment>
<comment type="interaction">
    <interactant intactId="EBI-540797">
        <id>Q9UBL3</id>
    </interactant>
    <interactant intactId="EBI-1237481">
        <id>O43823</id>
        <label>AKAP8</label>
    </interactant>
    <organismsDiffer>false</organismsDiffer>
    <experiments>3</experiments>
</comment>
<comment type="interaction">
    <interactant intactId="EBI-540797">
        <id>Q9UBL3</id>
    </interactant>
    <interactant intactId="EBI-608057">
        <id>P10275</id>
        <label>AR</label>
    </interactant>
    <organismsDiffer>false</organismsDiffer>
    <experiments>3</experiments>
</comment>
<comment type="interaction">
    <interactant intactId="EBI-540797">
        <id>Q9UBL3</id>
    </interactant>
    <interactant intactId="EBI-395261">
        <id>P24863</id>
        <label>CCNC</label>
    </interactant>
    <organismsDiffer>false</organismsDiffer>
    <experiments>3</experiments>
</comment>
<comment type="interaction">
    <interactant intactId="EBI-540797">
        <id>Q9UBL3</id>
    </interactant>
    <interactant intactId="EBI-742887">
        <id>Q8TAP6</id>
        <label>CEP76</label>
    </interactant>
    <organismsDiffer>false</organismsDiffer>
    <experiments>3</experiments>
</comment>
<comment type="interaction">
    <interactant intactId="EBI-540797">
        <id>Q9UBL3</id>
    </interactant>
    <interactant intactId="EBI-1169146">
        <id>Q9HCK8</id>
        <label>CHD8</label>
    </interactant>
    <organismsDiffer>false</organismsDiffer>
    <experiments>2</experiments>
</comment>
<comment type="interaction">
    <interactant intactId="EBI-540797">
        <id>Q9UBL3</id>
    </interactant>
    <interactant intactId="EBI-744973">
        <id>Q9C005</id>
        <label>DPY30</label>
    </interactant>
    <organismsDiffer>false</organismsDiffer>
    <experiments>23</experiments>
</comment>
<comment type="interaction">
    <interactant intactId="EBI-540797">
        <id>Q9UBL3</id>
    </interactant>
    <interactant intactId="EBI-447295">
        <id>Q09472</id>
        <label>EP300</label>
    </interactant>
    <organismsDiffer>false</organismsDiffer>
    <experiments>5</experiments>
</comment>
<comment type="interaction">
    <interactant intactId="EBI-540797">
        <id>Q9UBL3</id>
    </interactant>
    <interactant intactId="EBI-25852368">
        <id>O75460-2</id>
        <label>ERN1</label>
    </interactant>
    <organismsDiffer>false</organismsDiffer>
    <experiments>3</experiments>
</comment>
<comment type="interaction">
    <interactant intactId="EBI-540797">
        <id>Q9UBL3</id>
    </interactant>
    <interactant intactId="EBI-10226858">
        <id>Q0VDC6</id>
        <label>FKBP1A</label>
    </interactant>
    <organismsDiffer>false</organismsDiffer>
    <experiments>3</experiments>
</comment>
<comment type="interaction">
    <interactant intactId="EBI-540797">
        <id>Q9UBL3</id>
    </interactant>
    <interactant intactId="EBI-396176">
        <id>P51610</id>
        <label>HCFC1</label>
    </interactant>
    <organismsDiffer>false</organismsDiffer>
    <experiments>7</experiments>
</comment>
<comment type="interaction">
    <interactant intactId="EBI-540797">
        <id>Q9UBL3</id>
    </interactant>
    <interactant intactId="EBI-356991">
        <id>P54652</id>
        <label>HSPA2</label>
    </interactant>
    <organismsDiffer>false</organismsDiffer>
    <experiments>3</experiments>
</comment>
<comment type="interaction">
    <interactant intactId="EBI-540797">
        <id>Q9UBL3</id>
    </interactant>
    <interactant intactId="EBI-6165891">
        <id>Q14696</id>
        <label>MESD</label>
    </interactant>
    <organismsDiffer>false</organismsDiffer>
    <experiments>3</experiments>
</comment>
<comment type="interaction">
    <interactant intactId="EBI-540797">
        <id>Q9UBL3</id>
    </interactant>
    <interactant intactId="EBI-78670">
        <id>Q14686</id>
        <label>NCOA6</label>
    </interactant>
    <organismsDiffer>false</organismsDiffer>
    <experiments>15</experiments>
</comment>
<comment type="interaction">
    <interactant intactId="EBI-540797">
        <id>Q9UBL3</id>
    </interactant>
    <interactant intactId="EBI-743225">
        <id>Q6ZW49</id>
        <label>PAXIP1</label>
    </interactant>
    <organismsDiffer>false</organismsDiffer>
    <experiments>13</experiments>
</comment>
<comment type="interaction">
    <interactant intactId="EBI-540797">
        <id>Q9UBL3</id>
    </interactant>
    <interactant intactId="EBI-592823">
        <id>Q15291</id>
        <label>RBBP5</label>
    </interactant>
    <organismsDiffer>false</organismsDiffer>
    <experiments>39</experiments>
</comment>
<comment type="interaction">
    <interactant intactId="EBI-540797">
        <id>Q9UBL3</id>
    </interactant>
    <interactant intactId="EBI-366083">
        <id>P04637</id>
        <label>TP53</label>
    </interactant>
    <organismsDiffer>false</organismsDiffer>
    <experiments>8</experiments>
</comment>
<comment type="interaction">
    <interactant intactId="EBI-16130425">
        <id>Q9UBL3-3</id>
    </interactant>
    <interactant intactId="EBI-744973">
        <id>Q9C005</id>
        <label>DPY30</label>
    </interactant>
    <organismsDiffer>false</organismsDiffer>
    <experiments>7</experiments>
</comment>
<comment type="interaction">
    <interactant intactId="EBI-16130425">
        <id>Q9UBL3-3</id>
    </interactant>
    <interactant intactId="EBI-591370">
        <id>Q03164</id>
        <label>KMT2A</label>
    </interactant>
    <organismsDiffer>false</organismsDiffer>
    <experiments>4</experiments>
</comment>
<comment type="interaction">
    <interactant intactId="EBI-16130425">
        <id>Q9UBL3-3</id>
    </interactant>
    <interactant intactId="EBI-765774">
        <id>Q9UMN6</id>
        <label>KMT2B</label>
    </interactant>
    <organismsDiffer>false</organismsDiffer>
    <experiments>2</experiments>
</comment>
<comment type="interaction">
    <interactant intactId="EBI-16130425">
        <id>Q9UBL3-3</id>
    </interactant>
    <interactant intactId="EBI-1042997">
        <id>Q8NEZ4</id>
        <label>KMT2C</label>
    </interactant>
    <organismsDiffer>false</organismsDiffer>
    <experiments>5</experiments>
</comment>
<comment type="interaction">
    <interactant intactId="EBI-16130425">
        <id>Q9UBL3-3</id>
    </interactant>
    <interactant intactId="EBI-996065">
        <id>O14686</id>
        <label>KMT2D</label>
    </interactant>
    <organismsDiffer>false</organismsDiffer>
    <experiments>2</experiments>
</comment>
<comment type="interaction">
    <interactant intactId="EBI-16130425">
        <id>Q9UBL3-3</id>
    </interactant>
    <interactant intactId="EBI-592823">
        <id>Q15291</id>
        <label>RBBP5</label>
    </interactant>
    <organismsDiffer>false</organismsDiffer>
    <experiments>9</experiments>
</comment>
<comment type="interaction">
    <interactant intactId="EBI-16130425">
        <id>Q9UBL3-3</id>
    </interactant>
    <interactant intactId="EBI-540779">
        <id>O15047</id>
        <label>SETD1A</label>
    </interactant>
    <organismsDiffer>false</organismsDiffer>
    <experiments>2</experiments>
</comment>
<comment type="interaction">
    <interactant intactId="EBI-16130425">
        <id>Q9UBL3-3</id>
    </interactant>
    <interactant intactId="EBI-16197836">
        <id>Q9UPS6-2</id>
        <label>SETD1B</label>
    </interactant>
    <organismsDiffer>false</organismsDiffer>
    <experiments>2</experiments>
</comment>
<comment type="subcellular location">
    <subcellularLocation>
        <location evidence="23">Nucleus</location>
    </subcellularLocation>
</comment>
<comment type="alternative products">
    <event type="alternative splicing"/>
    <isoform>
        <id>Q9UBL3-1</id>
        <name>1</name>
        <name>ASH2L1</name>
        <sequence type="displayed"/>
    </isoform>
    <isoform>
        <id>Q9UBL3-2</id>
        <name>2</name>
        <name>ASH2L2</name>
        <sequence type="described" ref="VSP_007577 VSP_007578"/>
    </isoform>
    <isoform>
        <id>Q9UBL3-3</id>
        <name>3</name>
        <sequence type="described" ref="VSP_007577"/>
    </isoform>
</comment>
<comment type="tissue specificity">
    <text evidence="4">Ubiquitously expressed. Predominantly expressed in adult heart and testis and fetal lung and liver, with barely detectable expression in adult lung, liver, kidney, prostate, and peripheral leukocytes.</text>
</comment>
<comment type="PTM">
    <text evidence="17">Both monomethylated and dimethylated on arginine residues in the C-terminus. Arg-296 is the major site. Methylation is not required for nuclear localization, nor for MLL complex integrity or maintenance of global histone H3K4me3 levels.</text>
</comment>
<comment type="online information" name="Atlas of Genetics and Cytogenetics in Oncology and Haematology">
    <link uri="https://atlasgeneticsoncology.org/gene/44404/ASH2L"/>
</comment>
<protein>
    <recommendedName>
        <fullName>Set1/Ash2 histone methyltransferase complex subunit ASH2</fullName>
    </recommendedName>
    <alternativeName>
        <fullName>ASH2-like protein</fullName>
    </alternativeName>
</protein>
<feature type="chain" id="PRO_0000064697" description="Set1/Ash2 histone methyltransferase complex subunit ASH2">
    <location>
        <begin position="1"/>
        <end position="628"/>
    </location>
</feature>
<feature type="domain" description="B30.2/SPRY" evidence="2">
    <location>
        <begin position="360"/>
        <end position="583"/>
    </location>
</feature>
<feature type="zinc finger region" description="PHD-type; atypical">
    <location>
        <begin position="1"/>
        <end position="66"/>
    </location>
</feature>
<feature type="zinc finger region" description="C4-type">
    <location>
        <begin position="117"/>
        <end position="150"/>
    </location>
</feature>
<feature type="region of interest" description="Disordered" evidence="3">
    <location>
        <begin position="1"/>
        <end position="107"/>
    </location>
</feature>
<feature type="region of interest" description="DNA-binding">
    <location>
        <begin position="67"/>
        <end position="177"/>
    </location>
</feature>
<feature type="region of interest" description="Disordered" evidence="3">
    <location>
        <begin position="235"/>
        <end position="331"/>
    </location>
</feature>
<feature type="region of interest" description="Interaction with RBBP5" evidence="16">
    <location>
        <begin position="316"/>
        <end position="628"/>
    </location>
</feature>
<feature type="compositionally biased region" description="Gly residues" evidence="3">
    <location>
        <begin position="1"/>
        <end position="18"/>
    </location>
</feature>
<feature type="compositionally biased region" description="Low complexity" evidence="3">
    <location>
        <begin position="36"/>
        <end position="65"/>
    </location>
</feature>
<feature type="compositionally biased region" description="Basic and acidic residues" evidence="3">
    <location>
        <begin position="235"/>
        <end position="252"/>
    </location>
</feature>
<feature type="compositionally biased region" description="Polar residues" evidence="3">
    <location>
        <begin position="270"/>
        <end position="282"/>
    </location>
</feature>
<feature type="compositionally biased region" description="Gly residues" evidence="3">
    <location>
        <begin position="283"/>
        <end position="295"/>
    </location>
</feature>
<feature type="modified residue" description="Phosphoserine" evidence="24">
    <location>
        <position position="101"/>
    </location>
</feature>
<feature type="modified residue" description="Asymmetric dimethylarginine; by PRMT1 and PRMT5" evidence="17">
    <location>
        <position position="296"/>
    </location>
</feature>
<feature type="modified residue" description="Phosphoserine" evidence="26">
    <location>
        <position position="316"/>
    </location>
</feature>
<feature type="splice variant" id="VSP_007577" description="In isoform 2 and isoform 3." evidence="19 20 21">
    <location>
        <begin position="1"/>
        <end position="94"/>
    </location>
</feature>
<feature type="splice variant" id="VSP_007578" description="In isoform 2." evidence="19">
    <location>
        <begin position="541"/>
        <end position="573"/>
    </location>
</feature>
<feature type="sequence variant" id="VAR_050679" description="In dbSNP:rs34167006.">
    <original>S</original>
    <variation>F</variation>
    <location>
        <position position="478"/>
    </location>
</feature>
<feature type="mutagenesis site" description="Abolishes methylation." evidence="17">
    <original>R</original>
    <variation>K</variation>
    <location>
        <position position="296"/>
    </location>
</feature>
<feature type="mutagenesis site" description="Slightly decreased methylation." evidence="17">
    <original>R</original>
    <variation>K</variation>
    <location>
        <position position="300"/>
    </location>
</feature>
<feature type="sequence conflict" description="In Ref. 1; AAC13564." evidence="22" ref="1">
    <original>Q</original>
    <variation>H</variation>
    <location>
        <position position="212"/>
    </location>
</feature>
<feature type="sequence conflict" description="In Ref. 1; AAC13564." evidence="22" ref="1">
    <original>M</original>
    <variation>T</variation>
    <location>
        <position position="217"/>
    </location>
</feature>
<feature type="sequence conflict" description="In Ref. 1; AAC13563." evidence="22" ref="1">
    <original>S</original>
    <variation>T</variation>
    <location>
        <position position="292"/>
    </location>
</feature>
<feature type="sequence conflict" description="In Ref. 1; AAC13564." evidence="22" ref="1">
    <original>H</original>
    <variation>Q</variation>
    <location>
        <position position="351"/>
    </location>
</feature>
<feature type="sequence conflict" description="In Ref. 1; AAC13564." evidence="22" ref="1">
    <original>L</original>
    <variation>I</variation>
    <location>
        <position position="360"/>
    </location>
</feature>
<feature type="sequence conflict" description="In Ref. 1; AAC13564." evidence="22" ref="1">
    <original>P</original>
    <variation>S</variation>
    <location>
        <position position="369"/>
    </location>
</feature>
<feature type="strand" evidence="27">
    <location>
        <begin position="114"/>
        <end position="116"/>
    </location>
</feature>
<feature type="turn" evidence="27">
    <location>
        <begin position="118"/>
        <end position="120"/>
    </location>
</feature>
<feature type="strand" evidence="27">
    <location>
        <begin position="123"/>
        <end position="125"/>
    </location>
</feature>
<feature type="helix" evidence="27">
    <location>
        <begin position="126"/>
        <end position="129"/>
    </location>
</feature>
<feature type="strand" evidence="27">
    <location>
        <begin position="142"/>
        <end position="146"/>
    </location>
</feature>
<feature type="turn" evidence="27">
    <location>
        <begin position="148"/>
        <end position="150"/>
    </location>
</feature>
<feature type="strand" evidence="27">
    <location>
        <begin position="157"/>
        <end position="160"/>
    </location>
</feature>
<feature type="helix" evidence="27">
    <location>
        <begin position="165"/>
        <end position="183"/>
    </location>
</feature>
<feature type="turn" evidence="27">
    <location>
        <begin position="193"/>
        <end position="196"/>
    </location>
</feature>
<feature type="helix" evidence="27">
    <location>
        <begin position="197"/>
        <end position="203"/>
    </location>
</feature>
<feature type="helix" evidence="27">
    <location>
        <begin position="205"/>
        <end position="207"/>
    </location>
</feature>
<feature type="helix" evidence="27">
    <location>
        <begin position="219"/>
        <end position="221"/>
    </location>
</feature>
<feature type="helix" evidence="27">
    <location>
        <begin position="223"/>
        <end position="228"/>
    </location>
</feature>
<feature type="turn" evidence="27">
    <location>
        <begin position="231"/>
        <end position="233"/>
    </location>
</feature>
<feature type="strand" evidence="27">
    <location>
        <begin position="234"/>
        <end position="239"/>
    </location>
</feature>
<feature type="helix" evidence="27">
    <location>
        <begin position="248"/>
        <end position="250"/>
    </location>
</feature>
<feature type="strand" evidence="27">
    <location>
        <begin position="252"/>
        <end position="257"/>
    </location>
</feature>
<feature type="helix" evidence="27">
    <location>
        <begin position="261"/>
        <end position="263"/>
    </location>
</feature>
<feature type="helix" evidence="28">
    <location>
        <begin position="371"/>
        <end position="373"/>
    </location>
</feature>
<feature type="strand" evidence="28">
    <location>
        <begin position="376"/>
        <end position="378"/>
    </location>
</feature>
<feature type="strand" evidence="31">
    <location>
        <begin position="383"/>
        <end position="388"/>
    </location>
</feature>
<feature type="strand" evidence="31">
    <location>
        <begin position="392"/>
        <end position="394"/>
    </location>
</feature>
<feature type="strand" evidence="31">
    <location>
        <begin position="398"/>
        <end position="402"/>
    </location>
</feature>
<feature type="strand" evidence="31">
    <location>
        <begin position="408"/>
        <end position="413"/>
    </location>
</feature>
<feature type="strand" evidence="31">
    <location>
        <begin position="416"/>
        <end position="429"/>
    </location>
</feature>
<feature type="strand" evidence="31">
    <location>
        <begin position="435"/>
        <end position="441"/>
    </location>
</feature>
<feature type="strand" evidence="31">
    <location>
        <begin position="457"/>
        <end position="461"/>
    </location>
</feature>
<feature type="turn" evidence="31">
    <location>
        <begin position="462"/>
        <end position="465"/>
    </location>
</feature>
<feature type="strand" evidence="31">
    <location>
        <begin position="467"/>
        <end position="469"/>
    </location>
</feature>
<feature type="strand" evidence="31">
    <location>
        <begin position="472"/>
        <end position="474"/>
    </location>
</feature>
<feature type="strand" evidence="31">
    <location>
        <begin position="485"/>
        <end position="492"/>
    </location>
</feature>
<feature type="strand" evidence="31">
    <location>
        <begin position="540"/>
        <end position="545"/>
    </location>
</feature>
<feature type="strand" evidence="31">
    <location>
        <begin position="548"/>
        <end position="556"/>
    </location>
</feature>
<feature type="strand" evidence="31">
    <location>
        <begin position="562"/>
        <end position="571"/>
    </location>
</feature>
<feature type="strand" evidence="31">
    <location>
        <begin position="573"/>
        <end position="577"/>
    </location>
</feature>
<feature type="strand" evidence="28">
    <location>
        <begin position="579"/>
        <end position="581"/>
    </location>
</feature>
<feature type="strand" evidence="30">
    <location>
        <begin position="587"/>
        <end position="589"/>
    </location>
</feature>
<feature type="helix" evidence="31">
    <location>
        <begin position="594"/>
        <end position="597"/>
    </location>
</feature>
<feature type="strand" evidence="28">
    <location>
        <begin position="599"/>
        <end position="602"/>
    </location>
</feature>
<feature type="helix" evidence="29">
    <location>
        <begin position="603"/>
        <end position="615"/>
    </location>
</feature>
<feature type="modified residue" description="N-acetylmethionine" evidence="25">
    <location sequence="Q9UBL3-2">
        <position position="1"/>
    </location>
</feature>
<feature type="modified residue" description="N-acetylmethionine" evidence="25">
    <location sequence="Q9UBL3-3">
        <position position="1"/>
    </location>
</feature>
<evidence type="ECO:0000250" key="1">
    <source>
        <dbReference type="UniProtKB" id="Q91X20"/>
    </source>
</evidence>
<evidence type="ECO:0000255" key="2">
    <source>
        <dbReference type="PROSITE-ProRule" id="PRU00548"/>
    </source>
</evidence>
<evidence type="ECO:0000256" key="3">
    <source>
        <dbReference type="SAM" id="MobiDB-lite"/>
    </source>
</evidence>
<evidence type="ECO:0000269" key="4">
    <source>
    </source>
</evidence>
<evidence type="ECO:0000269" key="5">
    <source>
    </source>
</evidence>
<evidence type="ECO:0000269" key="6">
    <source>
    </source>
</evidence>
<evidence type="ECO:0000269" key="7">
    <source>
    </source>
</evidence>
<evidence type="ECO:0000269" key="8">
    <source>
    </source>
</evidence>
<evidence type="ECO:0000269" key="9">
    <source>
    </source>
</evidence>
<evidence type="ECO:0000269" key="10">
    <source>
    </source>
</evidence>
<evidence type="ECO:0000269" key="11">
    <source>
    </source>
</evidence>
<evidence type="ECO:0000269" key="12">
    <source>
    </source>
</evidence>
<evidence type="ECO:0000269" key="13">
    <source>
    </source>
</evidence>
<evidence type="ECO:0000269" key="14">
    <source>
    </source>
</evidence>
<evidence type="ECO:0000269" key="15">
    <source>
    </source>
</evidence>
<evidence type="ECO:0000269" key="16">
    <source>
    </source>
</evidence>
<evidence type="ECO:0000269" key="17">
    <source>
    </source>
</evidence>
<evidence type="ECO:0000269" key="18">
    <source>
    </source>
</evidence>
<evidence type="ECO:0000303" key="19">
    <source>
    </source>
</evidence>
<evidence type="ECO:0000303" key="20">
    <source>
    </source>
</evidence>
<evidence type="ECO:0000303" key="21">
    <source>
    </source>
</evidence>
<evidence type="ECO:0000305" key="22"/>
<evidence type="ECO:0000305" key="23">
    <source>
    </source>
</evidence>
<evidence type="ECO:0007744" key="24">
    <source>
    </source>
</evidence>
<evidence type="ECO:0007744" key="25">
    <source>
    </source>
</evidence>
<evidence type="ECO:0007744" key="26">
    <source>
    </source>
</evidence>
<evidence type="ECO:0007829" key="27">
    <source>
        <dbReference type="PDB" id="3RSN"/>
    </source>
</evidence>
<evidence type="ECO:0007829" key="28">
    <source>
        <dbReference type="PDB" id="3TOJ"/>
    </source>
</evidence>
<evidence type="ECO:0007829" key="29">
    <source>
        <dbReference type="PDB" id="4RIQ"/>
    </source>
</evidence>
<evidence type="ECO:0007829" key="30">
    <source>
        <dbReference type="PDB" id="4X8P"/>
    </source>
</evidence>
<evidence type="ECO:0007829" key="31">
    <source>
        <dbReference type="PDB" id="5F6L"/>
    </source>
</evidence>
<organism>
    <name type="scientific">Homo sapiens</name>
    <name type="common">Human</name>
    <dbReference type="NCBI Taxonomy" id="9606"/>
    <lineage>
        <taxon>Eukaryota</taxon>
        <taxon>Metazoa</taxon>
        <taxon>Chordata</taxon>
        <taxon>Craniata</taxon>
        <taxon>Vertebrata</taxon>
        <taxon>Euteleostomi</taxon>
        <taxon>Mammalia</taxon>
        <taxon>Eutheria</taxon>
        <taxon>Euarchontoglires</taxon>
        <taxon>Primates</taxon>
        <taxon>Haplorrhini</taxon>
        <taxon>Catarrhini</taxon>
        <taxon>Hominidae</taxon>
        <taxon>Homo</taxon>
    </lineage>
</organism>
<gene>
    <name type="primary">ASH2L</name>
    <name type="synonym">ASH2L1</name>
</gene>
<dbReference type="EMBL" id="AF056718">
    <property type="protein sequence ID" value="AAC13564.1"/>
    <property type="molecule type" value="mRNA"/>
</dbReference>
<dbReference type="EMBL" id="AF056717">
    <property type="protein sequence ID" value="AAC13563.1"/>
    <property type="molecule type" value="mRNA"/>
</dbReference>
<dbReference type="EMBL" id="AB022785">
    <property type="protein sequence ID" value="BAA74520.1"/>
    <property type="molecule type" value="Genomic_DNA"/>
</dbReference>
<dbReference type="EMBL" id="AB020982">
    <property type="protein sequence ID" value="BAA35127.1"/>
    <property type="molecule type" value="mRNA"/>
</dbReference>
<dbReference type="EMBL" id="AK291938">
    <property type="protein sequence ID" value="BAF84627.1"/>
    <property type="molecule type" value="mRNA"/>
</dbReference>
<dbReference type="EMBL" id="CH471080">
    <property type="protein sequence ID" value="EAW63337.1"/>
    <property type="molecule type" value="Genomic_DNA"/>
</dbReference>
<dbReference type="EMBL" id="CH471080">
    <property type="protein sequence ID" value="EAW63336.1"/>
    <property type="molecule type" value="Genomic_DNA"/>
</dbReference>
<dbReference type="EMBL" id="CH471080">
    <property type="protein sequence ID" value="EAW63340.1"/>
    <property type="molecule type" value="Genomic_DNA"/>
</dbReference>
<dbReference type="EMBL" id="BC015936">
    <property type="protein sequence ID" value="AAH15936.1"/>
    <property type="molecule type" value="mRNA"/>
</dbReference>
<dbReference type="CCDS" id="CCDS47840.1">
    <molecule id="Q9UBL3-3"/>
</dbReference>
<dbReference type="CCDS" id="CCDS59100.1">
    <molecule id="Q9UBL3-2"/>
</dbReference>
<dbReference type="CCDS" id="CCDS6101.1">
    <molecule id="Q9UBL3-1"/>
</dbReference>
<dbReference type="RefSeq" id="NP_001098684.1">
    <molecule id="Q9UBL3-3"/>
    <property type="nucleotide sequence ID" value="NM_001105214.2"/>
</dbReference>
<dbReference type="RefSeq" id="NP_001248761.1">
    <molecule id="Q9UBL3-2"/>
    <property type="nucleotide sequence ID" value="NM_001261832.1"/>
</dbReference>
<dbReference type="RefSeq" id="NP_004665.2">
    <molecule id="Q9UBL3-1"/>
    <property type="nucleotide sequence ID" value="NM_004674.5"/>
</dbReference>
<dbReference type="PDB" id="3RSN">
    <property type="method" value="X-ray"/>
    <property type="resolution" value="2.10 A"/>
    <property type="chains" value="A=96-271"/>
</dbReference>
<dbReference type="PDB" id="3S32">
    <property type="method" value="X-ray"/>
    <property type="resolution" value="2.45 A"/>
    <property type="chains" value="A=95-280"/>
</dbReference>
<dbReference type="PDB" id="3TOJ">
    <property type="method" value="X-ray"/>
    <property type="resolution" value="2.07 A"/>
    <property type="chains" value="A/B=370-496, A/B=539-617"/>
</dbReference>
<dbReference type="PDB" id="4RIQ">
    <property type="method" value="X-ray"/>
    <property type="resolution" value="2.23 A"/>
    <property type="chains" value="C/F/I/L/O/R/U/X=603-618"/>
</dbReference>
<dbReference type="PDB" id="4X8N">
    <property type="method" value="X-ray"/>
    <property type="resolution" value="2.10 A"/>
    <property type="chains" value="A=380-495, A=539-598"/>
</dbReference>
<dbReference type="PDB" id="4X8P">
    <property type="method" value="X-ray"/>
    <property type="resolution" value="2.20 A"/>
    <property type="chains" value="A=380-495, A=539-598"/>
</dbReference>
<dbReference type="PDB" id="5F6K">
    <property type="method" value="X-ray"/>
    <property type="resolution" value="2.41 A"/>
    <property type="chains" value="A/B=380-496, A/B=539-598"/>
</dbReference>
<dbReference type="PDB" id="5F6L">
    <property type="method" value="X-ray"/>
    <property type="resolution" value="1.90 A"/>
    <property type="chains" value="B=380-496, B=539-598"/>
</dbReference>
<dbReference type="PDB" id="6E2H">
    <property type="method" value="X-ray"/>
    <property type="resolution" value="2.24 A"/>
    <property type="chains" value="D=380-622"/>
</dbReference>
<dbReference type="PDB" id="6KIU">
    <property type="method" value="EM"/>
    <property type="resolution" value="3.20 A"/>
    <property type="chains" value="T=95-628"/>
</dbReference>
<dbReference type="PDB" id="6KIV">
    <property type="method" value="EM"/>
    <property type="resolution" value="4.00 A"/>
    <property type="chains" value="T=95-628"/>
</dbReference>
<dbReference type="PDB" id="6KIW">
    <property type="method" value="EM"/>
    <property type="resolution" value="4.00 A"/>
    <property type="chains" value="T=95-628"/>
</dbReference>
<dbReference type="PDB" id="6KIX">
    <property type="method" value="EM"/>
    <property type="resolution" value="4.10 A"/>
    <property type="chains" value="T=95-628"/>
</dbReference>
<dbReference type="PDB" id="6KIZ">
    <property type="method" value="EM"/>
    <property type="resolution" value="4.50 A"/>
    <property type="chains" value="T=95-628"/>
</dbReference>
<dbReference type="PDB" id="6PWV">
    <property type="method" value="EM"/>
    <property type="resolution" value="6.20 A"/>
    <property type="chains" value="D=96-628"/>
</dbReference>
<dbReference type="PDB" id="6W5I">
    <property type="method" value="EM"/>
    <property type="resolution" value="6.90 A"/>
    <property type="chains" value="D=96-628"/>
</dbReference>
<dbReference type="PDB" id="6W5M">
    <property type="method" value="EM"/>
    <property type="resolution" value="4.60 A"/>
    <property type="chains" value="D=96-628"/>
</dbReference>
<dbReference type="PDB" id="6W5N">
    <property type="method" value="EM"/>
    <property type="resolution" value="6.00 A"/>
    <property type="chains" value="D=96-628"/>
</dbReference>
<dbReference type="PDB" id="7BRE">
    <property type="method" value="X-ray"/>
    <property type="resolution" value="2.80 A"/>
    <property type="chains" value="A/D=380-496, A/D=516-598"/>
</dbReference>
<dbReference type="PDB" id="7MBM">
    <property type="method" value="EM"/>
    <property type="chains" value="D=96-628"/>
</dbReference>
<dbReference type="PDB" id="7MBN">
    <property type="method" value="EM"/>
    <property type="chains" value="D=96-628"/>
</dbReference>
<dbReference type="PDB" id="7UD5">
    <property type="method" value="EM"/>
    <property type="resolution" value="4.25 A"/>
    <property type="chains" value="M=95-628"/>
</dbReference>
<dbReference type="PDB" id="7W67">
    <property type="method" value="X-ray"/>
    <property type="resolution" value="2.19 A"/>
    <property type="chains" value="A=380-496, A=516-598"/>
</dbReference>
<dbReference type="PDB" id="7W6A">
    <property type="method" value="X-ray"/>
    <property type="resolution" value="2.21 A"/>
    <property type="chains" value="A=380-496, A=516-598"/>
</dbReference>
<dbReference type="PDB" id="7W6I">
    <property type="method" value="X-ray"/>
    <property type="resolution" value="2.56 A"/>
    <property type="chains" value="A=380-496, A=516-598"/>
</dbReference>
<dbReference type="PDB" id="7W6J">
    <property type="method" value="X-ray"/>
    <property type="resolution" value="2.68 A"/>
    <property type="chains" value="A=380-496, A=516-598"/>
</dbReference>
<dbReference type="PDB" id="7W6L">
    <property type="method" value="X-ray"/>
    <property type="resolution" value="2.26 A"/>
    <property type="chains" value="A/B=380-496, A/B=516-598"/>
</dbReference>
<dbReference type="PDBsum" id="3RSN"/>
<dbReference type="PDBsum" id="3S32"/>
<dbReference type="PDBsum" id="3TOJ"/>
<dbReference type="PDBsum" id="4RIQ"/>
<dbReference type="PDBsum" id="4X8N"/>
<dbReference type="PDBsum" id="4X8P"/>
<dbReference type="PDBsum" id="5F6K"/>
<dbReference type="PDBsum" id="5F6L"/>
<dbReference type="PDBsum" id="6E2H"/>
<dbReference type="PDBsum" id="6KIU"/>
<dbReference type="PDBsum" id="6KIV"/>
<dbReference type="PDBsum" id="6KIW"/>
<dbReference type="PDBsum" id="6KIX"/>
<dbReference type="PDBsum" id="6KIZ"/>
<dbReference type="PDBsum" id="6PWV"/>
<dbReference type="PDBsum" id="6W5I"/>
<dbReference type="PDBsum" id="6W5M"/>
<dbReference type="PDBsum" id="6W5N"/>
<dbReference type="PDBsum" id="7BRE"/>
<dbReference type="PDBsum" id="7MBM"/>
<dbReference type="PDBsum" id="7MBN"/>
<dbReference type="PDBsum" id="7UD5"/>
<dbReference type="PDBsum" id="7W67"/>
<dbReference type="PDBsum" id="7W6A"/>
<dbReference type="PDBsum" id="7W6I"/>
<dbReference type="PDBsum" id="7W6J"/>
<dbReference type="PDBsum" id="7W6L"/>
<dbReference type="EMDB" id="EMD-0693"/>
<dbReference type="EMDB" id="EMD-0694"/>
<dbReference type="EMDB" id="EMD-0695"/>
<dbReference type="EMDB" id="EMD-20512"/>
<dbReference type="EMDB" id="EMD-21542"/>
<dbReference type="EMDB" id="EMD-21543"/>
<dbReference type="EMDB" id="EMD-21544"/>
<dbReference type="EMDB" id="EMD-23738"/>
<dbReference type="EMDB" id="EMD-23739"/>
<dbReference type="EMDB" id="EMD-26454"/>
<dbReference type="EMDB" id="EMD-9998"/>
<dbReference type="EMDB" id="EMD-9999"/>
<dbReference type="SASBDB" id="Q9UBL3"/>
<dbReference type="SMR" id="Q9UBL3"/>
<dbReference type="BioGRID" id="114528">
    <property type="interactions" value="261"/>
</dbReference>
<dbReference type="ComplexPortal" id="CPX-5850">
    <property type="entry name" value="Histone-lysine N-methyltransferase complex, KMT2A variant"/>
</dbReference>
<dbReference type="ComplexPortal" id="CPX-7062">
    <property type="entry name" value="Histone-lysine N-methyltransferase complex, KMT2B variant"/>
</dbReference>
<dbReference type="ComplexPortal" id="CPX-7091">
    <property type="entry name" value="Histone-lysine N-methyltransferase complex, KMT2C variant"/>
</dbReference>
<dbReference type="ComplexPortal" id="CPX-7104">
    <property type="entry name" value="Histone-lysine N-methyltransferase complex, KMT2D variant"/>
</dbReference>
<dbReference type="ComplexPortal" id="CPX-7110">
    <property type="entry name" value="Histone-lysine N-methyltransferase complex, SET1A variant"/>
</dbReference>
<dbReference type="ComplexPortal" id="CPX-7111">
    <property type="entry name" value="Histone-lysine N-methyltransferase complex, SET1B variant"/>
</dbReference>
<dbReference type="CORUM" id="Q9UBL3"/>
<dbReference type="DIP" id="DIP-29222N"/>
<dbReference type="FunCoup" id="Q9UBL3">
    <property type="interactions" value="3474"/>
</dbReference>
<dbReference type="IntAct" id="Q9UBL3">
    <property type="interactions" value="134"/>
</dbReference>
<dbReference type="MINT" id="Q9UBL3"/>
<dbReference type="STRING" id="9606.ENSP00000340896"/>
<dbReference type="BindingDB" id="Q9UBL3"/>
<dbReference type="ChEMBL" id="CHEMBL3137282"/>
<dbReference type="GlyGen" id="Q9UBL3">
    <property type="glycosylation" value="2 sites, 1 N-linked glycan (1 site), 1 O-linked glycan (1 site)"/>
</dbReference>
<dbReference type="iPTMnet" id="Q9UBL3"/>
<dbReference type="PhosphoSitePlus" id="Q9UBL3"/>
<dbReference type="SwissPalm" id="Q9UBL3"/>
<dbReference type="BioMuta" id="ASH2L"/>
<dbReference type="DMDM" id="32141382"/>
<dbReference type="jPOST" id="Q9UBL3"/>
<dbReference type="MassIVE" id="Q9UBL3"/>
<dbReference type="PaxDb" id="9606-ENSP00000340896"/>
<dbReference type="PeptideAtlas" id="Q9UBL3"/>
<dbReference type="ProteomicsDB" id="83994">
    <molecule id="Q9UBL3-1"/>
</dbReference>
<dbReference type="ProteomicsDB" id="83995">
    <molecule id="Q9UBL3-2"/>
</dbReference>
<dbReference type="ProteomicsDB" id="83996">
    <molecule id="Q9UBL3-3"/>
</dbReference>
<dbReference type="Pumba" id="Q9UBL3"/>
<dbReference type="Antibodypedia" id="10852">
    <property type="antibodies" value="431 antibodies from 37 providers"/>
</dbReference>
<dbReference type="DNASU" id="9070"/>
<dbReference type="Ensembl" id="ENST00000343823.11">
    <molecule id="Q9UBL3-1"/>
    <property type="protein sequence ID" value="ENSP00000340896.5"/>
    <property type="gene ID" value="ENSG00000129691.16"/>
</dbReference>
<dbReference type="Ensembl" id="ENST00000428278.6">
    <molecule id="Q9UBL3-3"/>
    <property type="protein sequence ID" value="ENSP00000395310.2"/>
    <property type="gene ID" value="ENSG00000129691.16"/>
</dbReference>
<dbReference type="Ensembl" id="ENST00000521652.5">
    <molecule id="Q9UBL3-2"/>
    <property type="protein sequence ID" value="ENSP00000430259.1"/>
    <property type="gene ID" value="ENSG00000129691.16"/>
</dbReference>
<dbReference type="GeneID" id="9070"/>
<dbReference type="KEGG" id="hsa:9070"/>
<dbReference type="MANE-Select" id="ENST00000343823.11">
    <property type="protein sequence ID" value="ENSP00000340896.5"/>
    <property type="RefSeq nucleotide sequence ID" value="NM_004674.5"/>
    <property type="RefSeq protein sequence ID" value="NP_004665.2"/>
</dbReference>
<dbReference type="UCSC" id="uc003xkt.6">
    <molecule id="Q9UBL3-1"/>
    <property type="organism name" value="human"/>
</dbReference>
<dbReference type="AGR" id="HGNC:744"/>
<dbReference type="CTD" id="9070"/>
<dbReference type="DisGeNET" id="9070"/>
<dbReference type="GeneCards" id="ASH2L"/>
<dbReference type="HGNC" id="HGNC:744">
    <property type="gene designation" value="ASH2L"/>
</dbReference>
<dbReference type="HPA" id="ENSG00000129691">
    <property type="expression patterns" value="Low tissue specificity"/>
</dbReference>
<dbReference type="MIM" id="604782">
    <property type="type" value="gene"/>
</dbReference>
<dbReference type="neXtProt" id="NX_Q9UBL3"/>
<dbReference type="OpenTargets" id="ENSG00000129691"/>
<dbReference type="PharmGKB" id="PA25044"/>
<dbReference type="VEuPathDB" id="HostDB:ENSG00000129691"/>
<dbReference type="eggNOG" id="KOG2626">
    <property type="taxonomic scope" value="Eukaryota"/>
</dbReference>
<dbReference type="GeneTree" id="ENSGT00390000010474"/>
<dbReference type="InParanoid" id="Q9UBL3"/>
<dbReference type="OMA" id="CATCSRW"/>
<dbReference type="OrthoDB" id="10266026at2759"/>
<dbReference type="PAN-GO" id="Q9UBL3">
    <property type="GO annotations" value="3 GO annotations based on evolutionary models"/>
</dbReference>
<dbReference type="PhylomeDB" id="Q9UBL3"/>
<dbReference type="TreeFam" id="TF314785"/>
<dbReference type="PathwayCommons" id="Q9UBL3"/>
<dbReference type="Reactome" id="R-HSA-201722">
    <property type="pathway name" value="Formation of the beta-catenin:TCF transactivating complex"/>
</dbReference>
<dbReference type="Reactome" id="R-HSA-3214841">
    <property type="pathway name" value="PKMTs methylate histone lysines"/>
</dbReference>
<dbReference type="Reactome" id="R-HSA-3769402">
    <property type="pathway name" value="Deactivation of the beta-catenin transactivating complex"/>
</dbReference>
<dbReference type="Reactome" id="R-HSA-5617472">
    <property type="pathway name" value="Activation of anterior HOX genes in hindbrain development during early embryogenesis"/>
</dbReference>
<dbReference type="Reactome" id="R-HSA-8936459">
    <property type="pathway name" value="RUNX1 regulates genes involved in megakaryocyte differentiation and platelet function"/>
</dbReference>
<dbReference type="Reactome" id="R-HSA-9772755">
    <property type="pathway name" value="Formation of WDR5-containing histone-modifying complexes"/>
</dbReference>
<dbReference type="Reactome" id="R-HSA-9818564">
    <property type="pathway name" value="Epigenetic regulation of gene expression by MLL3 and MLL4 complexes"/>
</dbReference>
<dbReference type="Reactome" id="R-HSA-9841922">
    <property type="pathway name" value="MLL4 and MLL3 complexes regulate expression of PPARG target genes in adipogenesis and hepatic steatosis"/>
</dbReference>
<dbReference type="SignaLink" id="Q9UBL3"/>
<dbReference type="SIGNOR" id="Q9UBL3"/>
<dbReference type="BioGRID-ORCS" id="9070">
    <property type="hits" value="344 hits in 1201 CRISPR screens"/>
</dbReference>
<dbReference type="ChiTaRS" id="ASH2L">
    <property type="organism name" value="human"/>
</dbReference>
<dbReference type="EvolutionaryTrace" id="Q9UBL3"/>
<dbReference type="GeneWiki" id="ASH2L"/>
<dbReference type="GenomeRNAi" id="9070"/>
<dbReference type="Pharos" id="Q9UBL3">
    <property type="development level" value="Tbio"/>
</dbReference>
<dbReference type="PRO" id="PR:Q9UBL3"/>
<dbReference type="Proteomes" id="UP000005640">
    <property type="component" value="Chromosome 8"/>
</dbReference>
<dbReference type="RNAct" id="Q9UBL3">
    <property type="molecule type" value="protein"/>
</dbReference>
<dbReference type="Bgee" id="ENSG00000129691">
    <property type="expression patterns" value="Expressed in superficial temporal artery and 211 other cell types or tissues"/>
</dbReference>
<dbReference type="ExpressionAtlas" id="Q9UBL3">
    <property type="expression patterns" value="baseline and differential"/>
</dbReference>
<dbReference type="GO" id="GO:0035097">
    <property type="term" value="C:histone methyltransferase complex"/>
    <property type="evidence" value="ECO:0000314"/>
    <property type="project" value="UniProtKB"/>
</dbReference>
<dbReference type="GO" id="GO:0071339">
    <property type="term" value="C:MLL1 complex"/>
    <property type="evidence" value="ECO:0000353"/>
    <property type="project" value="ComplexPortal"/>
</dbReference>
<dbReference type="GO" id="GO:0044665">
    <property type="term" value="C:MLL1/2 complex"/>
    <property type="evidence" value="ECO:0000353"/>
    <property type="project" value="ComplexPortal"/>
</dbReference>
<dbReference type="GO" id="GO:0044666">
    <property type="term" value="C:MLL3/4 complex"/>
    <property type="evidence" value="ECO:0000314"/>
    <property type="project" value="UniProtKB"/>
</dbReference>
<dbReference type="GO" id="GO:0005654">
    <property type="term" value="C:nucleoplasm"/>
    <property type="evidence" value="ECO:0000304"/>
    <property type="project" value="Reactome"/>
</dbReference>
<dbReference type="GO" id="GO:0005634">
    <property type="term" value="C:nucleus"/>
    <property type="evidence" value="ECO:0000314"/>
    <property type="project" value="UniProtKB"/>
</dbReference>
<dbReference type="GO" id="GO:0048188">
    <property type="term" value="C:Set1C/COMPASS complex"/>
    <property type="evidence" value="ECO:0000314"/>
    <property type="project" value="UniProtKB"/>
</dbReference>
<dbReference type="GO" id="GO:0008013">
    <property type="term" value="F:beta-catenin binding"/>
    <property type="evidence" value="ECO:0000353"/>
    <property type="project" value="BHF-UCL"/>
</dbReference>
<dbReference type="GO" id="GO:0000976">
    <property type="term" value="F:transcription cis-regulatory region binding"/>
    <property type="evidence" value="ECO:0000314"/>
    <property type="project" value="UniProtKB"/>
</dbReference>
<dbReference type="GO" id="GO:0008270">
    <property type="term" value="F:zinc ion binding"/>
    <property type="evidence" value="ECO:0007669"/>
    <property type="project" value="UniProtKB-KW"/>
</dbReference>
<dbReference type="GO" id="GO:0006974">
    <property type="term" value="P:DNA damage response"/>
    <property type="evidence" value="ECO:0000314"/>
    <property type="project" value="MGI"/>
</dbReference>
<dbReference type="GO" id="GO:0030097">
    <property type="term" value="P:hemopoiesis"/>
    <property type="evidence" value="ECO:0000303"/>
    <property type="project" value="UniProtKB"/>
</dbReference>
<dbReference type="GO" id="GO:0008284">
    <property type="term" value="P:positive regulation of cell population proliferation"/>
    <property type="evidence" value="ECO:0000315"/>
    <property type="project" value="UniProtKB"/>
</dbReference>
<dbReference type="GO" id="GO:0043627">
    <property type="term" value="P:response to estrogen"/>
    <property type="evidence" value="ECO:0000314"/>
    <property type="project" value="UniProtKB"/>
</dbReference>
<dbReference type="GO" id="GO:0045815">
    <property type="term" value="P:transcription initiation-coupled chromatin remodeling"/>
    <property type="evidence" value="ECO:0000314"/>
    <property type="project" value="UniProtKB"/>
</dbReference>
<dbReference type="CDD" id="cd15583">
    <property type="entry name" value="PHD_ash2p_like"/>
    <property type="match status" value="1"/>
</dbReference>
<dbReference type="CDD" id="cd12872">
    <property type="entry name" value="SPRY_Ash2"/>
    <property type="match status" value="1"/>
</dbReference>
<dbReference type="FunFam" id="3.90.980.20:FF:000002">
    <property type="entry name" value="Ash2 like, histone lysine methyltransferase complex subunit"/>
    <property type="match status" value="1"/>
</dbReference>
<dbReference type="FunFam" id="2.60.120.920:FF:000008">
    <property type="entry name" value="Set1/Ash2 histone methyltransferase complex subunit ASH2"/>
    <property type="match status" value="1"/>
</dbReference>
<dbReference type="Gene3D" id="2.60.120.920">
    <property type="match status" value="1"/>
</dbReference>
<dbReference type="Gene3D" id="3.90.980.20">
    <property type="match status" value="1"/>
</dbReference>
<dbReference type="InterPro" id="IPR037353">
    <property type="entry name" value="ASH2"/>
</dbReference>
<dbReference type="InterPro" id="IPR049455">
    <property type="entry name" value="ASH2-like_PHD"/>
</dbReference>
<dbReference type="InterPro" id="IPR053835">
    <property type="entry name" value="ASH2L-like_WH"/>
</dbReference>
<dbReference type="InterPro" id="IPR001870">
    <property type="entry name" value="B30.2/SPRY"/>
</dbReference>
<dbReference type="InterPro" id="IPR043136">
    <property type="entry name" value="B30.2/SPRY_sf"/>
</dbReference>
<dbReference type="InterPro" id="IPR013320">
    <property type="entry name" value="ConA-like_dom_sf"/>
</dbReference>
<dbReference type="InterPro" id="IPR003877">
    <property type="entry name" value="SPRY_dom"/>
</dbReference>
<dbReference type="PANTHER" id="PTHR10598">
    <property type="entry name" value="SET1/ASH2 HISTONE METHYLTRANSFERASE COMPLEX SUBUNIT ASH2"/>
    <property type="match status" value="1"/>
</dbReference>
<dbReference type="PANTHER" id="PTHR10598:SF0">
    <property type="entry name" value="SET1_ASH2 HISTONE METHYLTRANSFERASE COMPLEX SUBUNIT ASH2"/>
    <property type="match status" value="1"/>
</dbReference>
<dbReference type="Pfam" id="PF21198">
    <property type="entry name" value="ASH2L-like_WH"/>
    <property type="match status" value="1"/>
</dbReference>
<dbReference type="Pfam" id="PF21257">
    <property type="entry name" value="PHD_ash2p_like"/>
    <property type="match status" value="1"/>
</dbReference>
<dbReference type="Pfam" id="PF00622">
    <property type="entry name" value="SPRY"/>
    <property type="match status" value="1"/>
</dbReference>
<dbReference type="SMART" id="SM00449">
    <property type="entry name" value="SPRY"/>
    <property type="match status" value="1"/>
</dbReference>
<dbReference type="SUPFAM" id="SSF49899">
    <property type="entry name" value="Concanavalin A-like lectins/glucanases"/>
    <property type="match status" value="1"/>
</dbReference>
<dbReference type="PROSITE" id="PS50188">
    <property type="entry name" value="B302_SPRY"/>
    <property type="match status" value="1"/>
</dbReference>
<accession>Q9UBL3</accession>
<accession>A8K7C3</accession>
<accession>D3DSW9</accession>
<accession>O60659</accession>
<accession>O60660</accession>
<accession>Q96B62</accession>
<name>ASH2L_HUMAN</name>
<reference key="1">
    <citation type="journal article" date="2001" name="J. Mol. Med.">
        <title>ASH2L: alternative splicing and downregulation during induced megakaryocytic differentiation of multipotential leukemia cell lines.</title>
        <authorList>
            <person name="Wang J."/>
            <person name="Zhou Y."/>
            <person name="Yin B."/>
            <person name="Du G."/>
            <person name="Huang X."/>
            <person name="Li G."/>
            <person name="Shen Y."/>
            <person name="Yuan J."/>
            <person name="Qiang B."/>
        </authorList>
    </citation>
    <scope>NUCLEOTIDE SEQUENCE [MRNA] (ISOFORMS 1 AND 2)</scope>
    <source>
        <tissue>Fetal brain</tissue>
    </source>
</reference>
<reference key="2">
    <citation type="journal article" date="1999" name="Cytogenet. Cell Genet.">
        <title>Cloning and characterization of ASH2L and ash2l, human and mouse homologs of the Drosophila ash2 gene.</title>
        <authorList>
            <person name="Ikegawa S."/>
            <person name="Isomura M."/>
            <person name="Koshizuka Y."/>
            <person name="Nakamura Y."/>
        </authorList>
    </citation>
    <scope>NUCLEOTIDE SEQUENCE [GENOMIC DNA] (ISOFORM 1)</scope>
    <scope>TISSUE SPECIFICITY</scope>
</reference>
<reference key="3">
    <citation type="journal article" date="2004" name="Nat. Genet.">
        <title>Complete sequencing and characterization of 21,243 full-length human cDNAs.</title>
        <authorList>
            <person name="Ota T."/>
            <person name="Suzuki Y."/>
            <person name="Nishikawa T."/>
            <person name="Otsuki T."/>
            <person name="Sugiyama T."/>
            <person name="Irie R."/>
            <person name="Wakamatsu A."/>
            <person name="Hayashi K."/>
            <person name="Sato H."/>
            <person name="Nagai K."/>
            <person name="Kimura K."/>
            <person name="Makita H."/>
            <person name="Sekine M."/>
            <person name="Obayashi M."/>
            <person name="Nishi T."/>
            <person name="Shibahara T."/>
            <person name="Tanaka T."/>
            <person name="Ishii S."/>
            <person name="Yamamoto J."/>
            <person name="Saito K."/>
            <person name="Kawai Y."/>
            <person name="Isono Y."/>
            <person name="Nakamura Y."/>
            <person name="Nagahari K."/>
            <person name="Murakami K."/>
            <person name="Yasuda T."/>
            <person name="Iwayanagi T."/>
            <person name="Wagatsuma M."/>
            <person name="Shiratori A."/>
            <person name="Sudo H."/>
            <person name="Hosoiri T."/>
            <person name="Kaku Y."/>
            <person name="Kodaira H."/>
            <person name="Kondo H."/>
            <person name="Sugawara M."/>
            <person name="Takahashi M."/>
            <person name="Kanda K."/>
            <person name="Yokoi T."/>
            <person name="Furuya T."/>
            <person name="Kikkawa E."/>
            <person name="Omura Y."/>
            <person name="Abe K."/>
            <person name="Kamihara K."/>
            <person name="Katsuta N."/>
            <person name="Sato K."/>
            <person name="Tanikawa M."/>
            <person name="Yamazaki M."/>
            <person name="Ninomiya K."/>
            <person name="Ishibashi T."/>
            <person name="Yamashita H."/>
            <person name="Murakawa K."/>
            <person name="Fujimori K."/>
            <person name="Tanai H."/>
            <person name="Kimata M."/>
            <person name="Watanabe M."/>
            <person name="Hiraoka S."/>
            <person name="Chiba Y."/>
            <person name="Ishida S."/>
            <person name="Ono Y."/>
            <person name="Takiguchi S."/>
            <person name="Watanabe S."/>
            <person name="Yosida M."/>
            <person name="Hotuta T."/>
            <person name="Kusano J."/>
            <person name="Kanehori K."/>
            <person name="Takahashi-Fujii A."/>
            <person name="Hara H."/>
            <person name="Tanase T.-O."/>
            <person name="Nomura Y."/>
            <person name="Togiya S."/>
            <person name="Komai F."/>
            <person name="Hara R."/>
            <person name="Takeuchi K."/>
            <person name="Arita M."/>
            <person name="Imose N."/>
            <person name="Musashino K."/>
            <person name="Yuuki H."/>
            <person name="Oshima A."/>
            <person name="Sasaki N."/>
            <person name="Aotsuka S."/>
            <person name="Yoshikawa Y."/>
            <person name="Matsunawa H."/>
            <person name="Ichihara T."/>
            <person name="Shiohata N."/>
            <person name="Sano S."/>
            <person name="Moriya S."/>
            <person name="Momiyama H."/>
            <person name="Satoh N."/>
            <person name="Takami S."/>
            <person name="Terashima Y."/>
            <person name="Suzuki O."/>
            <person name="Nakagawa S."/>
            <person name="Senoh A."/>
            <person name="Mizoguchi H."/>
            <person name="Goto Y."/>
            <person name="Shimizu F."/>
            <person name="Wakebe H."/>
            <person name="Hishigaki H."/>
            <person name="Watanabe T."/>
            <person name="Sugiyama A."/>
            <person name="Takemoto M."/>
            <person name="Kawakami B."/>
            <person name="Yamazaki M."/>
            <person name="Watanabe K."/>
            <person name="Kumagai A."/>
            <person name="Itakura S."/>
            <person name="Fukuzumi Y."/>
            <person name="Fujimori Y."/>
            <person name="Komiyama M."/>
            <person name="Tashiro H."/>
            <person name="Tanigami A."/>
            <person name="Fujiwara T."/>
            <person name="Ono T."/>
            <person name="Yamada K."/>
            <person name="Fujii Y."/>
            <person name="Ozaki K."/>
            <person name="Hirao M."/>
            <person name="Ohmori Y."/>
            <person name="Kawabata A."/>
            <person name="Hikiji T."/>
            <person name="Kobatake N."/>
            <person name="Inagaki H."/>
            <person name="Ikema Y."/>
            <person name="Okamoto S."/>
            <person name="Okitani R."/>
            <person name="Kawakami T."/>
            <person name="Noguchi S."/>
            <person name="Itoh T."/>
            <person name="Shigeta K."/>
            <person name="Senba T."/>
            <person name="Matsumura K."/>
            <person name="Nakajima Y."/>
            <person name="Mizuno T."/>
            <person name="Morinaga M."/>
            <person name="Sasaki M."/>
            <person name="Togashi T."/>
            <person name="Oyama M."/>
            <person name="Hata H."/>
            <person name="Watanabe M."/>
            <person name="Komatsu T."/>
            <person name="Mizushima-Sugano J."/>
            <person name="Satoh T."/>
            <person name="Shirai Y."/>
            <person name="Takahashi Y."/>
            <person name="Nakagawa K."/>
            <person name="Okumura K."/>
            <person name="Nagase T."/>
            <person name="Nomura N."/>
            <person name="Kikuchi H."/>
            <person name="Masuho Y."/>
            <person name="Yamashita R."/>
            <person name="Nakai K."/>
            <person name="Yada T."/>
            <person name="Nakamura Y."/>
            <person name="Ohara O."/>
            <person name="Isogai T."/>
            <person name="Sugano S."/>
        </authorList>
    </citation>
    <scope>NUCLEOTIDE SEQUENCE [LARGE SCALE MRNA] (ISOFORM 3)</scope>
</reference>
<reference key="4">
    <citation type="submission" date="2005-09" db="EMBL/GenBank/DDBJ databases">
        <authorList>
            <person name="Mural R.J."/>
            <person name="Istrail S."/>
            <person name="Sutton G.G."/>
            <person name="Florea L."/>
            <person name="Halpern A.L."/>
            <person name="Mobarry C.M."/>
            <person name="Lippert R."/>
            <person name="Walenz B."/>
            <person name="Shatkay H."/>
            <person name="Dew I."/>
            <person name="Miller J.R."/>
            <person name="Flanigan M.J."/>
            <person name="Edwards N.J."/>
            <person name="Bolanos R."/>
            <person name="Fasulo D."/>
            <person name="Halldorsson B.V."/>
            <person name="Hannenhalli S."/>
            <person name="Turner R."/>
            <person name="Yooseph S."/>
            <person name="Lu F."/>
            <person name="Nusskern D.R."/>
            <person name="Shue B.C."/>
            <person name="Zheng X.H."/>
            <person name="Zhong F."/>
            <person name="Delcher A.L."/>
            <person name="Huson D.H."/>
            <person name="Kravitz S.A."/>
            <person name="Mouchard L."/>
            <person name="Reinert K."/>
            <person name="Remington K.A."/>
            <person name="Clark A.G."/>
            <person name="Waterman M.S."/>
            <person name="Eichler E.E."/>
            <person name="Adams M.D."/>
            <person name="Hunkapiller M.W."/>
            <person name="Myers E.W."/>
            <person name="Venter J.C."/>
        </authorList>
    </citation>
    <scope>NUCLEOTIDE SEQUENCE [LARGE SCALE GENOMIC DNA]</scope>
</reference>
<reference key="5">
    <citation type="journal article" date="2004" name="Genome Res.">
        <title>The status, quality, and expansion of the NIH full-length cDNA project: the Mammalian Gene Collection (MGC).</title>
        <authorList>
            <consortium name="The MGC Project Team"/>
        </authorList>
    </citation>
    <scope>NUCLEOTIDE SEQUENCE [LARGE SCALE MRNA] (ISOFORM 3)</scope>
    <source>
        <tissue>Skin</tissue>
    </source>
</reference>
<reference key="6">
    <citation type="journal article" date="2003" name="Genes Dev.">
        <title>Human Sin3 deacetylase and trithorax-related Set1/Ash2 histone H3-K4 methyltransferase are tethered together selectively by the cell-proliferation factor HCF-1.</title>
        <authorList>
            <person name="Wysocka J."/>
            <person name="Myers M.P."/>
            <person name="Laherty C.D."/>
            <person name="Eisenman R.N."/>
            <person name="Herr W."/>
        </authorList>
    </citation>
    <scope>FUNCTION</scope>
    <scope>INTERACTION WITH HCFC1</scope>
</reference>
<reference key="7">
    <citation type="journal article" date="2004" name="Mol. Cell">
        <title>Menin associates with a trithorax family histone methyltransferase complex and with the hoxc8 locus.</title>
        <authorList>
            <person name="Hughes C.M."/>
            <person name="Rozenblatt-Rosen O."/>
            <person name="Milne T.A."/>
            <person name="Copeland T.D."/>
            <person name="Levine S.S."/>
            <person name="Lee J.C."/>
            <person name="Hayes D.N."/>
            <person name="Shanmugam K.S."/>
            <person name="Bhattacharjee A."/>
            <person name="Biondi C.A."/>
            <person name="Kay G.F."/>
            <person name="Hayward N.K."/>
            <person name="Hess J.L."/>
            <person name="Meyerson M."/>
        </authorList>
    </citation>
    <scope>IDENTIFICATION IN THE MEN1-ASSOCIATED HISTONE METHYLTRANSFERASE COMPLEX</scope>
</reference>
<reference key="8">
    <citation type="journal article" date="2004" name="Mol. Cell. Biol.">
        <title>Leukemia proto-oncoprotein MLL forms a SET1-like histone methyltransferase complex with menin to regulate Hox gene expression.</title>
        <authorList>
            <person name="Yokoyama A."/>
            <person name="Wang Z."/>
            <person name="Wysocka J."/>
            <person name="Sanyal M."/>
            <person name="Aufiero D.J."/>
            <person name="Kitabayashi I."/>
            <person name="Herr W."/>
            <person name="Cleary M.L."/>
        </authorList>
    </citation>
    <scope>IDENTIFICATION IN THE MLL-LIKE COMPLEX</scope>
</reference>
<reference key="9">
    <citation type="journal article" date="2005" name="Cell">
        <title>Physical association and coordinate function of the H3 K4 methyltransferase MLL1 and the H4 K16 acetyltransferase MOF.</title>
        <authorList>
            <person name="Dou Y."/>
            <person name="Milne T.A."/>
            <person name="Tackett A.J."/>
            <person name="Smith E.R."/>
            <person name="Fukuda A."/>
            <person name="Wysocka J."/>
            <person name="Allis C.D."/>
            <person name="Chait B.T."/>
            <person name="Hess J.L."/>
            <person name="Roeder R.G."/>
        </authorList>
    </citation>
    <scope>IDENTIFICATION IN THE MLL1/MLL COMPLEX</scope>
</reference>
<reference key="10">
    <citation type="journal article" date="2005" name="J. Biol. Chem.">
        <title>CpG-binding protein (CXXC finger protein 1) is a component of the mammalian Set1 histone H3-Lys4 methyltransferase complex, the analogue of the yeast Set1/COMPASS complex.</title>
        <authorList>
            <person name="Lee J.-H."/>
            <person name="Skalnik D.G."/>
        </authorList>
    </citation>
    <scope>IDENTIFICATION IN THE SET1 COMPLEX</scope>
</reference>
<reference key="11">
    <citation type="journal article" date="2007" name="J. Biol. Chem.">
        <title>Identification and characterization of the human Set1B histone H3-Lys4 methyltransferase complex.</title>
        <authorList>
            <person name="Lee J.-H."/>
            <person name="Tate C.M."/>
            <person name="You J.-S."/>
            <person name="Skalnik D.G."/>
        </authorList>
    </citation>
    <scope>SUBCELLULAR LOCATION</scope>
    <scope>IDENTIFICATION IN THE SET1 COMPLEX</scope>
</reference>
<reference key="12">
    <citation type="journal article" date="2007" name="J. Biol. Chem.">
        <title>PTIP associates with MLL3- and MLL4-containing histone H3 lysine 4 methyltransferase complex.</title>
        <authorList>
            <person name="Cho Y.-W."/>
            <person name="Hong T."/>
            <person name="Hong S."/>
            <person name="Guo H."/>
            <person name="Yu H."/>
            <person name="Kim D."/>
            <person name="Guszczynski T."/>
            <person name="Dressler G.R."/>
            <person name="Copeland T.D."/>
            <person name="Kalkum M."/>
            <person name="Ge K."/>
        </authorList>
    </citation>
    <scope>IDENTIFICATION BY MASS SPECTROMETRY</scope>
    <scope>IDENTIFICATION IN THE MLL2/3 COMPLEX</scope>
</reference>
<reference key="13">
    <citation type="journal article" date="2008" name="Mol. Cell. Biol.">
        <title>Wdr82 is a C-terminal domain-binding protein that recruits the Setd1A Histone H3-Lys4 methyltransferase complex to transcription start sites of transcribed human genes.</title>
        <authorList>
            <person name="Lee J.H."/>
            <person name="Skalnik D.G."/>
        </authorList>
    </citation>
    <scope>IDENTIFICATION IN SET1 COMPLEX</scope>
    <scope>INTERACTION WITH SETD1A AND SETD1B</scope>
</reference>
<reference key="14">
    <citation type="journal article" date="2008" name="Mol. Cell. Biol.">
        <title>Molecular regulation of H3K4 trimethylation by Wdr82, a component of human Set1/COMPASS.</title>
        <authorList>
            <person name="Wu M."/>
            <person name="Wang P.F."/>
            <person name="Lee J.S."/>
            <person name="Martin-Brown S."/>
            <person name="Florens L."/>
            <person name="Washburn M."/>
            <person name="Shilatifard A."/>
        </authorList>
    </citation>
    <scope>IDENTIFICATION IN SET1 COMPLEX</scope>
</reference>
<reference key="15">
    <citation type="journal article" date="2009" name="J. Biol. Chem.">
        <title>Identification and characterization of a novel nuclear protein complex involved in nuclear hormone receptor-mediated gene regulation.</title>
        <authorList>
            <person name="Garapaty S."/>
            <person name="Xu C.F."/>
            <person name="Trojer P."/>
            <person name="Mahajan M.A."/>
            <person name="Neubert T.A."/>
            <person name="Samuels H.H."/>
        </authorList>
    </citation>
    <scope>FUNCTION</scope>
    <scope>IDENTIFICATION IN A HISTONE METHYLATION COMPLEX</scope>
    <scope>INTERACTION WITH ZNF335; CCAR2; RBBP5 AND EMSY</scope>
</reference>
<reference key="16">
    <citation type="journal article" date="2009" name="J. Biol. Chem.">
        <title>On the mechanism of multiple lysine methylation by the human mixed lineage leukemia protein-1 (MLL1) core complex.</title>
        <authorList>
            <person name="Patel A."/>
            <person name="Dharmarajan V."/>
            <person name="Vought V.E."/>
            <person name="Cosgrove M.S."/>
        </authorList>
    </citation>
    <scope>FUNCTION</scope>
    <scope>CHARACTERIZATION OF THE MLL1/MLL COMPLEX</scope>
    <scope>INTERACTION WITH DPY30 AND RBBP5</scope>
</reference>
<reference key="17">
    <citation type="journal article" date="2010" name="Sci. Signal.">
        <title>Quantitative phosphoproteomics reveals widespread full phosphorylation site occupancy during mitosis.</title>
        <authorList>
            <person name="Olsen J.V."/>
            <person name="Vermeulen M."/>
            <person name="Santamaria A."/>
            <person name="Kumar C."/>
            <person name="Miller M.L."/>
            <person name="Jensen L.J."/>
            <person name="Gnad F."/>
            <person name="Cox J."/>
            <person name="Jensen T.S."/>
            <person name="Nigg E.A."/>
            <person name="Brunak S."/>
            <person name="Mann M."/>
        </authorList>
    </citation>
    <scope>PHOSPHORYLATION [LARGE SCALE ANALYSIS] AT SER-101</scope>
    <scope>IDENTIFICATION BY MASS SPECTROMETRY [LARGE SCALE ANALYSIS]</scope>
    <source>
        <tissue>Cervix carcinoma</tissue>
    </source>
</reference>
<reference key="18">
    <citation type="journal article" date="2011" name="BMC Syst. Biol.">
        <title>Initial characterization of the human central proteome.</title>
        <authorList>
            <person name="Burkard T.R."/>
            <person name="Planyavsky M."/>
            <person name="Kaupe I."/>
            <person name="Breitwieser F.P."/>
            <person name="Buerckstuemmer T."/>
            <person name="Bennett K.L."/>
            <person name="Superti-Furga G."/>
            <person name="Colinge J."/>
        </authorList>
    </citation>
    <scope>IDENTIFICATION BY MASS SPECTROMETRY [LARGE SCALE ANALYSIS]</scope>
</reference>
<reference key="19">
    <citation type="journal article" date="2011" name="J. Biol. Chem.">
        <title>Protein-arginine methyltransferase 1 (PRMT1) methylates Ash2L, a shared component of mammalian histone H3K4 methyltransferase complexes.</title>
        <authorList>
            <person name="Butler J.S."/>
            <person name="Zurita-Lopez C.I."/>
            <person name="Clarke S.G."/>
            <person name="Bedford M.T."/>
            <person name="Dent S.Y."/>
        </authorList>
    </citation>
    <scope>METHYLATION AT ARG-296 BY PRMT1 AND PRMT5</scope>
    <scope>MUTAGENESIS OF ARG-296 AND ARG-300</scope>
</reference>
<reference key="20">
    <citation type="journal article" date="2011" name="Structure">
        <title>Structural and biochemical insights into MLL1 core complex assembly.</title>
        <authorList>
            <person name="Avdic V."/>
            <person name="Zhang P."/>
            <person name="Lanouette S."/>
            <person name="Groulx A."/>
            <person name="Tremblay V."/>
            <person name="Brunzelle J."/>
            <person name="Couture J.F."/>
        </authorList>
    </citation>
    <scope>FUNCTION</scope>
    <scope>INTERACTION WITH RBBP5</scope>
</reference>
<reference key="21">
    <citation type="journal article" date="2012" name="Nucleic Acids Res.">
        <title>The plasticity of WDR5 peptide-binding cleft enables the binding of the SET1 family of histone methyltransferases.</title>
        <authorList>
            <person name="Zhang P."/>
            <person name="Lee H."/>
            <person name="Brunzelle J.S."/>
            <person name="Couture J.F."/>
        </authorList>
    </citation>
    <scope>FUNCTION</scope>
</reference>
<reference key="22">
    <citation type="journal article" date="2012" name="Proc. Natl. Acad. Sci. U.S.A.">
        <title>N-terminal acetylome analyses and functional insights of the N-terminal acetyltransferase NatB.</title>
        <authorList>
            <person name="Van Damme P."/>
            <person name="Lasa M."/>
            <person name="Polevoda B."/>
            <person name="Gazquez C."/>
            <person name="Elosegui-Artola A."/>
            <person name="Kim D.S."/>
            <person name="De Juan-Pardo E."/>
            <person name="Demeyer K."/>
            <person name="Hole K."/>
            <person name="Larrea E."/>
            <person name="Timmerman E."/>
            <person name="Prieto J."/>
            <person name="Arnesen T."/>
            <person name="Sherman F."/>
            <person name="Gevaert K."/>
            <person name="Aldabe R."/>
        </authorList>
    </citation>
    <scope>ACETYLATION [LARGE SCALE ANALYSIS] AT MET-1 (ISOFORMS 2 AND 3)</scope>
    <scope>IDENTIFICATION BY MASS SPECTROMETRY [LARGE SCALE ANALYSIS]</scope>
</reference>
<reference key="23">
    <citation type="journal article" date="2013" name="J. Proteome Res.">
        <title>Toward a comprehensive characterization of a human cancer cell phosphoproteome.</title>
        <authorList>
            <person name="Zhou H."/>
            <person name="Di Palma S."/>
            <person name="Preisinger C."/>
            <person name="Peng M."/>
            <person name="Polat A.N."/>
            <person name="Heck A.J."/>
            <person name="Mohammed S."/>
        </authorList>
    </citation>
    <scope>PHOSPHORYLATION [LARGE SCALE ANALYSIS] AT SER-316</scope>
    <scope>IDENTIFICATION BY MASS SPECTROMETRY [LARGE SCALE ANALYSIS]</scope>
    <source>
        <tissue>Erythroleukemia</tissue>
    </source>
</reference>
<reference key="24">
    <citation type="journal article" date="2011" name="EMBO Rep.">
        <title>Crystal structure of the N-terminal region of human Ash2L shows a winged-helix motif involved in DNA binding.</title>
        <authorList>
            <person name="Chen Y."/>
            <person name="Wan B."/>
            <person name="Wang K.C."/>
            <person name="Cao F."/>
            <person name="Yang Y."/>
            <person name="Protacio A."/>
            <person name="Dou Y."/>
            <person name="Chang H.Y."/>
            <person name="Lei M."/>
        </authorList>
    </citation>
    <scope>X-RAY CRYSTALLOGRAPHY (2.1 ANGSTROMS) OF 96-271</scope>
    <scope>DOMAIN PHD</scope>
    <scope>DNA-BINDING REGION</scope>
</reference>